<sequence length="43" mass="5034">YKRCHKKGGHCFPKEKICTPPSSDFGKMDCRWKWKCCKKGSVN</sequence>
<organism>
    <name type="scientific">Crotalus concolor</name>
    <name type="common">Midget faded rattlesnake</name>
    <name type="synonym">Crotalus oreganus concolor</name>
    <dbReference type="NCBI Taxonomy" id="8740"/>
    <lineage>
        <taxon>Eukaryota</taxon>
        <taxon>Metazoa</taxon>
        <taxon>Chordata</taxon>
        <taxon>Craniata</taxon>
        <taxon>Vertebrata</taxon>
        <taxon>Euteleostomi</taxon>
        <taxon>Lepidosauria</taxon>
        <taxon>Squamata</taxon>
        <taxon>Bifurcata</taxon>
        <taxon>Unidentata</taxon>
        <taxon>Episquamata</taxon>
        <taxon>Toxicofera</taxon>
        <taxon>Serpentes</taxon>
        <taxon>Colubroidea</taxon>
        <taxon>Viperidae</taxon>
        <taxon>Crotalinae</taxon>
        <taxon>Crotalus</taxon>
    </lineage>
</organism>
<evidence type="ECO:0000250" key="1"/>
<evidence type="ECO:0000250" key="2">
    <source>
        <dbReference type="UniProtKB" id="Q9PWF3"/>
    </source>
</evidence>
<evidence type="ECO:0000269" key="3">
    <source>
    </source>
</evidence>
<evidence type="ECO:0000303" key="4">
    <source>
    </source>
</evidence>
<evidence type="ECO:0000305" key="5"/>
<evidence type="ECO:0000305" key="6">
    <source>
    </source>
</evidence>
<reference key="1">
    <citation type="journal article" date="1987" name="Toxicon">
        <title>Amino acid sequences of myotoxins from Crotalus viridis concolor venom.</title>
        <authorList>
            <person name="Bieber A.L."/>
            <person name="McParland R.H."/>
            <person name="Becker R.R."/>
        </authorList>
    </citation>
    <scope>PROTEIN SEQUENCE</scope>
    <scope>SUBCELLULAR LOCATION</scope>
    <source>
        <tissue>Venom</tissue>
    </source>
</reference>
<name>MYX2_CROCL</name>
<keyword id="KW-0929">Antimicrobial</keyword>
<keyword id="KW-0903">Direct protein sequencing</keyword>
<keyword id="KW-1015">Disulfide bond</keyword>
<keyword id="KW-0872">Ion channel impairing toxin</keyword>
<keyword id="KW-0959">Myotoxin</keyword>
<keyword id="KW-0528">Neurotoxin</keyword>
<keyword id="KW-0632">Potassium channel impairing toxin</keyword>
<keyword id="KW-0964">Secreted</keyword>
<keyword id="KW-0800">Toxin</keyword>
<keyword id="KW-1220">Voltage-gated potassium channel impairing toxin</keyword>
<feature type="chain" id="PRO_0000221565" description="Myotoxin-2" evidence="3">
    <location>
        <begin position="1"/>
        <end position="43"/>
    </location>
</feature>
<feature type="disulfide bond" evidence="2">
    <location>
        <begin position="4"/>
        <end position="36"/>
    </location>
</feature>
<feature type="disulfide bond" evidence="2">
    <location>
        <begin position="11"/>
        <end position="30"/>
    </location>
</feature>
<feature type="disulfide bond" evidence="2">
    <location>
        <begin position="18"/>
        <end position="37"/>
    </location>
</feature>
<feature type="sequence variant">
    <original>E</original>
    <variation>T</variation>
    <location>
        <position position="15"/>
    </location>
</feature>
<feature type="sequence variant">
    <original>K</original>
    <variation>V</variation>
    <location>
        <position position="16"/>
    </location>
</feature>
<feature type="sequence variant">
    <original>T</original>
    <variation>L</variation>
    <location>
        <position position="19"/>
    </location>
</feature>
<feature type="sequence variant">
    <original>K</original>
    <variation>R</variation>
    <location>
        <position position="33"/>
    </location>
</feature>
<protein>
    <recommendedName>
        <fullName evidence="5">Myotoxin-2</fullName>
    </recommendedName>
    <alternativeName>
        <fullName evidence="4">Myotoxin II</fullName>
    </alternativeName>
</protein>
<dbReference type="PIR" id="B29089">
    <property type="entry name" value="B29089"/>
</dbReference>
<dbReference type="SMR" id="P12029"/>
<dbReference type="GO" id="GO:0005576">
    <property type="term" value="C:extracellular region"/>
    <property type="evidence" value="ECO:0007669"/>
    <property type="project" value="UniProtKB-SubCell"/>
</dbReference>
<dbReference type="GO" id="GO:0015459">
    <property type="term" value="F:potassium channel regulator activity"/>
    <property type="evidence" value="ECO:0007669"/>
    <property type="project" value="UniProtKB-KW"/>
</dbReference>
<dbReference type="GO" id="GO:0090729">
    <property type="term" value="F:toxin activity"/>
    <property type="evidence" value="ECO:0007669"/>
    <property type="project" value="UniProtKB-KW"/>
</dbReference>
<dbReference type="GO" id="GO:0044564">
    <property type="term" value="P:envenomation resulting in occlusion of the pore of voltage-gated potassium channel in another organism"/>
    <property type="evidence" value="ECO:0000250"/>
    <property type="project" value="UniProtKB"/>
</dbReference>
<dbReference type="FunFam" id="2.20.20.10:FF:000001">
    <property type="entry name" value="Crotamine"/>
    <property type="match status" value="1"/>
</dbReference>
<dbReference type="Gene3D" id="2.20.20.10">
    <property type="entry name" value="Anthopleurin-A"/>
    <property type="match status" value="1"/>
</dbReference>
<dbReference type="InterPro" id="IPR023355">
    <property type="entry name" value="Myo_ane_neurotoxin_sf"/>
</dbReference>
<dbReference type="InterPro" id="IPR000881">
    <property type="entry name" value="Myotoxin"/>
</dbReference>
<dbReference type="Pfam" id="PF00819">
    <property type="entry name" value="Myotoxins"/>
    <property type="match status" value="1"/>
</dbReference>
<dbReference type="PRINTS" id="PR00283">
    <property type="entry name" value="MYOTOXIN"/>
</dbReference>
<dbReference type="SUPFAM" id="SSF57392">
    <property type="entry name" value="Defensin-like"/>
    <property type="match status" value="1"/>
</dbReference>
<dbReference type="PROSITE" id="PS00459">
    <property type="entry name" value="MYOTOXINS_1"/>
    <property type="match status" value="1"/>
</dbReference>
<dbReference type="PROSITE" id="PS51345">
    <property type="entry name" value="MYOTOXINS_2"/>
    <property type="match status" value="1"/>
</dbReference>
<accession>P12029</accession>
<proteinExistence type="evidence at protein level"/>
<comment type="function">
    <text evidence="2">Cationic peptide that possesses multiple functions. It acts as a cell-penetrating peptide (CPP), and as a potent voltage-gated potassium channel (Kv) inhibitor. It exhibits antimicrobial activities, hind limb paralysis, and severe muscle necrosis by a non-enzymatic mechanism.</text>
</comment>
<comment type="subunit">
    <text evidence="1">Monomer.</text>
</comment>
<comment type="subcellular location">
    <subcellularLocation>
        <location evidence="3">Secreted</location>
    </subcellularLocation>
</comment>
<comment type="tissue specificity">
    <text evidence="6">Expressed by the venom gland.</text>
</comment>
<comment type="similarity">
    <text evidence="5">Belongs to the crotamine-myotoxin family.</text>
</comment>